<evidence type="ECO:0000255" key="1">
    <source>
        <dbReference type="HAMAP-Rule" id="MF_01027"/>
    </source>
</evidence>
<organism>
    <name type="scientific">Pyrococcus abyssi (strain GE5 / Orsay)</name>
    <dbReference type="NCBI Taxonomy" id="272844"/>
    <lineage>
        <taxon>Archaea</taxon>
        <taxon>Methanobacteriati</taxon>
        <taxon>Methanobacteriota</taxon>
        <taxon>Thermococci</taxon>
        <taxon>Thermococcales</taxon>
        <taxon>Thermococcaceae</taxon>
        <taxon>Pyrococcus</taxon>
    </lineage>
</organism>
<keyword id="KW-0004">4Fe-4S</keyword>
<keyword id="KW-0028">Amino-acid biosynthesis</keyword>
<keyword id="KW-0100">Branched-chain amino acid biosynthesis</keyword>
<keyword id="KW-0408">Iron</keyword>
<keyword id="KW-0411">Iron-sulfur</keyword>
<keyword id="KW-0432">Leucine biosynthesis</keyword>
<keyword id="KW-0456">Lyase</keyword>
<keyword id="KW-0479">Metal-binding</keyword>
<accession>Q9UZ07</accession>
<accession>G8ZHF6</accession>
<name>LEUC1_PYRAB</name>
<comment type="function">
    <text evidence="1">Catalyzes the isomerization between 2-isopropylmalate and 3-isopropylmalate, via the formation of 2-isopropylmaleate.</text>
</comment>
<comment type="catalytic activity">
    <reaction evidence="1">
        <text>(2R,3S)-3-isopropylmalate = (2S)-2-isopropylmalate</text>
        <dbReference type="Rhea" id="RHEA:32287"/>
        <dbReference type="ChEBI" id="CHEBI:1178"/>
        <dbReference type="ChEBI" id="CHEBI:35121"/>
        <dbReference type="EC" id="4.2.1.33"/>
    </reaction>
</comment>
<comment type="cofactor">
    <cofactor evidence="1">
        <name>[4Fe-4S] cluster</name>
        <dbReference type="ChEBI" id="CHEBI:49883"/>
    </cofactor>
    <text evidence="1">Binds 1 [4Fe-4S] cluster per subunit.</text>
</comment>
<comment type="pathway">
    <text evidence="1">Amino-acid biosynthesis; L-leucine biosynthesis; L-leucine from 3-methyl-2-oxobutanoate: step 2/4.</text>
</comment>
<comment type="subunit">
    <text evidence="1">Heterodimer of LeuC and LeuD.</text>
</comment>
<comment type="similarity">
    <text evidence="1">Belongs to the aconitase/IPM isomerase family. LeuC type 2 subfamily.</text>
</comment>
<protein>
    <recommendedName>
        <fullName evidence="1">3-isopropylmalate dehydratase large subunit 1</fullName>
        <ecNumber evidence="1">4.2.1.33</ecNumber>
    </recommendedName>
    <alternativeName>
        <fullName evidence="1">Alpha-IPM isomerase 1</fullName>
        <shortName evidence="1">IPMI 1</shortName>
    </alternativeName>
    <alternativeName>
        <fullName evidence="1">Isopropylmalate isomerase 1</fullName>
    </alternativeName>
</protein>
<proteinExistence type="inferred from homology"/>
<gene>
    <name evidence="1" type="primary">leuC1</name>
    <name type="ordered locus">PYRAB13500</name>
    <name type="ORF">PAB0891</name>
</gene>
<reference key="1">
    <citation type="journal article" date="2003" name="Mol. Microbiol.">
        <title>An integrated analysis of the genome of the hyperthermophilic archaeon Pyrococcus abyssi.</title>
        <authorList>
            <person name="Cohen G.N."/>
            <person name="Barbe V."/>
            <person name="Flament D."/>
            <person name="Galperin M."/>
            <person name="Heilig R."/>
            <person name="Lecompte O."/>
            <person name="Poch O."/>
            <person name="Prieur D."/>
            <person name="Querellou J."/>
            <person name="Ripp R."/>
            <person name="Thierry J.-C."/>
            <person name="Van der Oost J."/>
            <person name="Weissenbach J."/>
            <person name="Zivanovic Y."/>
            <person name="Forterre P."/>
        </authorList>
    </citation>
    <scope>NUCLEOTIDE SEQUENCE [LARGE SCALE GENOMIC DNA]</scope>
    <source>
        <strain>GE5 / Orsay</strain>
    </source>
</reference>
<reference key="2">
    <citation type="journal article" date="2012" name="Curr. Microbiol.">
        <title>Re-annotation of two hyperthermophilic archaea Pyrococcus abyssi GE5 and Pyrococcus furiosus DSM 3638.</title>
        <authorList>
            <person name="Gao J."/>
            <person name="Wang J."/>
        </authorList>
    </citation>
    <scope>GENOME REANNOTATION</scope>
    <source>
        <strain>GE5 / Orsay</strain>
    </source>
</reference>
<dbReference type="EC" id="4.2.1.33" evidence="1"/>
<dbReference type="EMBL" id="AJ248287">
    <property type="protein sequence ID" value="CAB50255.1"/>
    <property type="molecule type" value="Genomic_DNA"/>
</dbReference>
<dbReference type="EMBL" id="HE613800">
    <property type="protein sequence ID" value="CCE70793.1"/>
    <property type="molecule type" value="Genomic_DNA"/>
</dbReference>
<dbReference type="PIR" id="B75045">
    <property type="entry name" value="B75045"/>
</dbReference>
<dbReference type="RefSeq" id="WP_010868465.1">
    <property type="nucleotide sequence ID" value="NC_000868.1"/>
</dbReference>
<dbReference type="SMR" id="Q9UZ07"/>
<dbReference type="STRING" id="272844.PAB0891"/>
<dbReference type="KEGG" id="pab:PAB0891"/>
<dbReference type="PATRIC" id="fig|272844.11.peg.1436"/>
<dbReference type="eggNOG" id="arCOG01698">
    <property type="taxonomic scope" value="Archaea"/>
</dbReference>
<dbReference type="HOGENOM" id="CLU_006714_3_4_2"/>
<dbReference type="OrthoDB" id="255at2157"/>
<dbReference type="PhylomeDB" id="Q9UZ07"/>
<dbReference type="UniPathway" id="UPA00048">
    <property type="reaction ID" value="UER00071"/>
</dbReference>
<dbReference type="Proteomes" id="UP000000810">
    <property type="component" value="Chromosome"/>
</dbReference>
<dbReference type="Proteomes" id="UP000009139">
    <property type="component" value="Chromosome"/>
</dbReference>
<dbReference type="GO" id="GO:0003861">
    <property type="term" value="F:3-isopropylmalate dehydratase activity"/>
    <property type="evidence" value="ECO:0007669"/>
    <property type="project" value="UniProtKB-UniRule"/>
</dbReference>
<dbReference type="GO" id="GO:0051539">
    <property type="term" value="F:4 iron, 4 sulfur cluster binding"/>
    <property type="evidence" value="ECO:0007669"/>
    <property type="project" value="UniProtKB-KW"/>
</dbReference>
<dbReference type="GO" id="GO:0046872">
    <property type="term" value="F:metal ion binding"/>
    <property type="evidence" value="ECO:0007669"/>
    <property type="project" value="UniProtKB-KW"/>
</dbReference>
<dbReference type="GO" id="GO:0009098">
    <property type="term" value="P:L-leucine biosynthetic process"/>
    <property type="evidence" value="ECO:0007669"/>
    <property type="project" value="UniProtKB-UniRule"/>
</dbReference>
<dbReference type="CDD" id="cd01583">
    <property type="entry name" value="IPMI"/>
    <property type="match status" value="1"/>
</dbReference>
<dbReference type="Gene3D" id="3.30.499.10">
    <property type="entry name" value="Aconitase, domain 3"/>
    <property type="match status" value="2"/>
</dbReference>
<dbReference type="HAMAP" id="MF_01027">
    <property type="entry name" value="LeuC_type2"/>
    <property type="match status" value="1"/>
</dbReference>
<dbReference type="InterPro" id="IPR015931">
    <property type="entry name" value="Acnase/IPM_dHydase_lsu_aba_1/3"/>
</dbReference>
<dbReference type="InterPro" id="IPR001030">
    <property type="entry name" value="Acoase/IPM_deHydtase_lsu_aba"/>
</dbReference>
<dbReference type="InterPro" id="IPR018136">
    <property type="entry name" value="Aconitase_4Fe-4S_BS"/>
</dbReference>
<dbReference type="InterPro" id="IPR036008">
    <property type="entry name" value="Aconitase_4Fe-4S_dom"/>
</dbReference>
<dbReference type="InterPro" id="IPR011826">
    <property type="entry name" value="HAcnase/IPMdehydase_lsu_prok"/>
</dbReference>
<dbReference type="InterPro" id="IPR006251">
    <property type="entry name" value="Homoacnase/IPMdehydase_lsu"/>
</dbReference>
<dbReference type="InterPro" id="IPR050067">
    <property type="entry name" value="IPM_dehydratase_rel_enz"/>
</dbReference>
<dbReference type="InterPro" id="IPR033941">
    <property type="entry name" value="IPMI_cat"/>
</dbReference>
<dbReference type="InterPro" id="IPR011823">
    <property type="entry name" value="IsopropMal_deHydtase_lsu_bac"/>
</dbReference>
<dbReference type="NCBIfam" id="TIGR01343">
    <property type="entry name" value="hacA_fam"/>
    <property type="match status" value="1"/>
</dbReference>
<dbReference type="NCBIfam" id="TIGR02086">
    <property type="entry name" value="IPMI_arch"/>
    <property type="match status" value="1"/>
</dbReference>
<dbReference type="NCBIfam" id="TIGR02083">
    <property type="entry name" value="LEU2"/>
    <property type="match status" value="1"/>
</dbReference>
<dbReference type="NCBIfam" id="NF001614">
    <property type="entry name" value="PRK00402.1"/>
    <property type="match status" value="1"/>
</dbReference>
<dbReference type="PANTHER" id="PTHR43822:SF16">
    <property type="entry name" value="3-ISOPROPYLMALATE DEHYDRATASE LARGE SUBUNIT 2"/>
    <property type="match status" value="1"/>
</dbReference>
<dbReference type="PANTHER" id="PTHR43822">
    <property type="entry name" value="HOMOACONITASE, MITOCHONDRIAL-RELATED"/>
    <property type="match status" value="1"/>
</dbReference>
<dbReference type="Pfam" id="PF00330">
    <property type="entry name" value="Aconitase"/>
    <property type="match status" value="1"/>
</dbReference>
<dbReference type="PRINTS" id="PR00415">
    <property type="entry name" value="ACONITASE"/>
</dbReference>
<dbReference type="SUPFAM" id="SSF53732">
    <property type="entry name" value="Aconitase iron-sulfur domain"/>
    <property type="match status" value="1"/>
</dbReference>
<dbReference type="PROSITE" id="PS00450">
    <property type="entry name" value="ACONITASE_1"/>
    <property type="match status" value="1"/>
</dbReference>
<dbReference type="PROSITE" id="PS01244">
    <property type="entry name" value="ACONITASE_2"/>
    <property type="match status" value="1"/>
</dbReference>
<feature type="chain" id="PRO_0000076877" description="3-isopropylmalate dehydratase large subunit 1">
    <location>
        <begin position="1"/>
        <end position="423"/>
    </location>
</feature>
<feature type="binding site" evidence="1">
    <location>
        <position position="302"/>
    </location>
    <ligand>
        <name>[4Fe-4S] cluster</name>
        <dbReference type="ChEBI" id="CHEBI:49883"/>
    </ligand>
</feature>
<feature type="binding site" evidence="1">
    <location>
        <position position="362"/>
    </location>
    <ligand>
        <name>[4Fe-4S] cluster</name>
        <dbReference type="ChEBI" id="CHEBI:49883"/>
    </ligand>
</feature>
<feature type="binding site" evidence="1">
    <location>
        <position position="365"/>
    </location>
    <ligand>
        <name>[4Fe-4S] cluster</name>
        <dbReference type="ChEBI" id="CHEBI:49883"/>
    </ligand>
</feature>
<sequence length="423" mass="46400">MGMTIAEKILADHSEREEVKPGEIVMAKLDFVFGNDVTMPLAIKKFRELGVKRVFDRERIAIVLDHFTPNKDIKSAEQCKSSREFAKEMGIKWFFEGGSVGVEHCLLPELGLVLPGDLIIGADSHTCTYGALGAFATGVGSTDLAVAMATGEAWFRVPETMKFIYEGELQPYVTGKDLILHTIGDIGVNGALYKVMEFSGSVIEELSVEQRMTMSNMAIEAGAKTGIIEPDKKTLDYVKERAKRKFKVYKSDEDAKYYKVIEYDVTNWEPVVAFPHLPENTVPISKAAKMNIKIDQVFIGSCTNGRIEDLRMAAEILEGQKVAKWVRLIVIPCSPTVYWKALKEGLIEIFLEAGAVIGPPTCGPCLGGHMGVLASGERAVSTTNRNFVGRMGHPKSEVYLANPYVAAASAVLGRIASPEEVVK</sequence>